<dbReference type="EC" id="2.5.1.61" evidence="1"/>
<dbReference type="EMBL" id="CP001404">
    <property type="protein sequence ID" value="ACP47966.1"/>
    <property type="molecule type" value="Genomic_DNA"/>
</dbReference>
<dbReference type="RefSeq" id="WP_012717240.1">
    <property type="nucleotide sequence ID" value="NC_012623.1"/>
</dbReference>
<dbReference type="SMR" id="C3NF70"/>
<dbReference type="GeneID" id="7809526"/>
<dbReference type="KEGG" id="sin:YN1551_0844"/>
<dbReference type="HOGENOM" id="CLU_019704_1_0_2"/>
<dbReference type="UniPathway" id="UPA00251">
    <property type="reaction ID" value="UER00319"/>
</dbReference>
<dbReference type="Proteomes" id="UP000006818">
    <property type="component" value="Chromosome"/>
</dbReference>
<dbReference type="GO" id="GO:0005737">
    <property type="term" value="C:cytoplasm"/>
    <property type="evidence" value="ECO:0007669"/>
    <property type="project" value="TreeGrafter"/>
</dbReference>
<dbReference type="GO" id="GO:0004418">
    <property type="term" value="F:hydroxymethylbilane synthase activity"/>
    <property type="evidence" value="ECO:0007669"/>
    <property type="project" value="UniProtKB-UniRule"/>
</dbReference>
<dbReference type="GO" id="GO:0006782">
    <property type="term" value="P:protoporphyrinogen IX biosynthetic process"/>
    <property type="evidence" value="ECO:0007669"/>
    <property type="project" value="UniProtKB-UniRule"/>
</dbReference>
<dbReference type="CDD" id="cd13644">
    <property type="entry name" value="PBP2_HemC_archaea"/>
    <property type="match status" value="1"/>
</dbReference>
<dbReference type="Gene3D" id="3.40.190.10">
    <property type="entry name" value="Periplasmic binding protein-like II"/>
    <property type="match status" value="2"/>
</dbReference>
<dbReference type="Gene3D" id="3.30.160.40">
    <property type="entry name" value="Porphobilinogen deaminase, C-terminal domain"/>
    <property type="match status" value="1"/>
</dbReference>
<dbReference type="HAMAP" id="MF_00260">
    <property type="entry name" value="Porphobil_deam"/>
    <property type="match status" value="1"/>
</dbReference>
<dbReference type="InterPro" id="IPR000860">
    <property type="entry name" value="HemC"/>
</dbReference>
<dbReference type="InterPro" id="IPR022419">
    <property type="entry name" value="Porphobilin_deaminase_cofac_BS"/>
</dbReference>
<dbReference type="InterPro" id="IPR022417">
    <property type="entry name" value="Porphobilin_deaminase_N"/>
</dbReference>
<dbReference type="InterPro" id="IPR022418">
    <property type="entry name" value="Porphobilinogen_deaminase_C"/>
</dbReference>
<dbReference type="InterPro" id="IPR036803">
    <property type="entry name" value="Porphobilinogen_deaminase_C_sf"/>
</dbReference>
<dbReference type="NCBIfam" id="TIGR00212">
    <property type="entry name" value="hemC"/>
    <property type="match status" value="1"/>
</dbReference>
<dbReference type="PANTHER" id="PTHR11557">
    <property type="entry name" value="PORPHOBILINOGEN DEAMINASE"/>
    <property type="match status" value="1"/>
</dbReference>
<dbReference type="PANTHER" id="PTHR11557:SF0">
    <property type="entry name" value="PORPHOBILINOGEN DEAMINASE"/>
    <property type="match status" value="1"/>
</dbReference>
<dbReference type="Pfam" id="PF01379">
    <property type="entry name" value="Porphobil_deam"/>
    <property type="match status" value="1"/>
</dbReference>
<dbReference type="Pfam" id="PF03900">
    <property type="entry name" value="Porphobil_deamC"/>
    <property type="match status" value="1"/>
</dbReference>
<dbReference type="PIRSF" id="PIRSF001438">
    <property type="entry name" value="4pyrrol_synth_OHMeBilane_synth"/>
    <property type="match status" value="1"/>
</dbReference>
<dbReference type="PRINTS" id="PR00151">
    <property type="entry name" value="PORPHBDMNASE"/>
</dbReference>
<dbReference type="SUPFAM" id="SSF53850">
    <property type="entry name" value="Periplasmic binding protein-like II"/>
    <property type="match status" value="1"/>
</dbReference>
<dbReference type="SUPFAM" id="SSF54782">
    <property type="entry name" value="Porphobilinogen deaminase (hydroxymethylbilane synthase), C-terminal domain"/>
    <property type="match status" value="1"/>
</dbReference>
<dbReference type="PROSITE" id="PS00533">
    <property type="entry name" value="PORPHOBILINOGEN_DEAM"/>
    <property type="match status" value="1"/>
</dbReference>
<keyword id="KW-0627">Porphyrin biosynthesis</keyword>
<keyword id="KW-0808">Transferase</keyword>
<reference key="1">
    <citation type="journal article" date="2009" name="Proc. Natl. Acad. Sci. U.S.A.">
        <title>Biogeography of the Sulfolobus islandicus pan-genome.</title>
        <authorList>
            <person name="Reno M.L."/>
            <person name="Held N.L."/>
            <person name="Fields C.J."/>
            <person name="Burke P.V."/>
            <person name="Whitaker R.J."/>
        </authorList>
    </citation>
    <scope>NUCLEOTIDE SEQUENCE [LARGE SCALE GENOMIC DNA]</scope>
    <source>
        <strain>Y.N.15.51 / Yellowstone #2</strain>
    </source>
</reference>
<comment type="function">
    <text evidence="1">Tetrapolymerization of the monopyrrole PBG into the hydroxymethylbilane pre-uroporphyrinogen in several discrete steps.</text>
</comment>
<comment type="catalytic activity">
    <reaction evidence="1">
        <text>4 porphobilinogen + H2O = hydroxymethylbilane + 4 NH4(+)</text>
        <dbReference type="Rhea" id="RHEA:13185"/>
        <dbReference type="ChEBI" id="CHEBI:15377"/>
        <dbReference type="ChEBI" id="CHEBI:28938"/>
        <dbReference type="ChEBI" id="CHEBI:57845"/>
        <dbReference type="ChEBI" id="CHEBI:58126"/>
        <dbReference type="EC" id="2.5.1.61"/>
    </reaction>
</comment>
<comment type="cofactor">
    <cofactor evidence="1">
        <name>dipyrromethane</name>
        <dbReference type="ChEBI" id="CHEBI:60342"/>
    </cofactor>
    <text evidence="1">Binds 1 dipyrromethane group covalently.</text>
</comment>
<comment type="pathway">
    <text evidence="1">Porphyrin-containing compound metabolism; protoporphyrin-IX biosynthesis; coproporphyrinogen-III from 5-aminolevulinate: step 2/4.</text>
</comment>
<comment type="miscellaneous">
    <text evidence="1">The porphobilinogen subunits are added to the dipyrromethane group.</text>
</comment>
<comment type="similarity">
    <text evidence="1">Belongs to the HMBS family.</text>
</comment>
<accession>C3NF70</accession>
<sequence>MKIRIAARGSKLSRIQVDMLGEKLKKIGIEYEIIDIKTKADLFSTEPLSKLGKGVFEKEVNEAVLEGKADIAVHSMKDILSEINPSLEIFAVLKRDPPYDILIAEKNLDKLDSNITIGTSSIRRKNFLKYIKPEINTKDIRGNVDTRIRKYLSKEYQGLILAEASLKRLNMTMNYHRLNVYDFTPEANQGIIVALGRKKDEKIKEIFKEINHKDTLDEALAERAVISLVGGGCHSPIGVLFKKEGKEFYGIASYSDGKKKITVSISKPGDPYTIGSELGLLLKKEMKNEDIIP</sequence>
<gene>
    <name evidence="1" type="primary">hemC</name>
    <name type="ordered locus">YN1551_0844</name>
</gene>
<name>HEM3_SACI1</name>
<feature type="chain" id="PRO_1000204666" description="Probable porphobilinogen deaminase">
    <location>
        <begin position="1"/>
        <end position="293"/>
    </location>
</feature>
<feature type="modified residue" description="S-(dipyrrolylmethanemethyl)cysteine" evidence="1">
    <location>
        <position position="233"/>
    </location>
</feature>
<evidence type="ECO:0000255" key="1">
    <source>
        <dbReference type="HAMAP-Rule" id="MF_00260"/>
    </source>
</evidence>
<protein>
    <recommendedName>
        <fullName evidence="1">Probable porphobilinogen deaminase</fullName>
        <shortName evidence="1">PBG</shortName>
        <ecNumber evidence="1">2.5.1.61</ecNumber>
    </recommendedName>
    <alternativeName>
        <fullName evidence="1">Hydroxymethylbilane synthase</fullName>
        <shortName evidence="1">HMBS</shortName>
    </alternativeName>
    <alternativeName>
        <fullName evidence="1">Pre-uroporphyrinogen synthase</fullName>
    </alternativeName>
</protein>
<organism>
    <name type="scientific">Saccharolobus islandicus (strain Y.N.15.51 / Yellowstone #2)</name>
    <name type="common">Sulfolobus islandicus</name>
    <dbReference type="NCBI Taxonomy" id="419942"/>
    <lineage>
        <taxon>Archaea</taxon>
        <taxon>Thermoproteota</taxon>
        <taxon>Thermoprotei</taxon>
        <taxon>Sulfolobales</taxon>
        <taxon>Sulfolobaceae</taxon>
        <taxon>Saccharolobus</taxon>
    </lineage>
</organism>
<proteinExistence type="inferred from homology"/>